<organism>
    <name type="scientific">Xenopus laevis</name>
    <name type="common">African clawed frog</name>
    <dbReference type="NCBI Taxonomy" id="8355"/>
    <lineage>
        <taxon>Eukaryota</taxon>
        <taxon>Metazoa</taxon>
        <taxon>Chordata</taxon>
        <taxon>Craniata</taxon>
        <taxon>Vertebrata</taxon>
        <taxon>Euteleostomi</taxon>
        <taxon>Amphibia</taxon>
        <taxon>Batrachia</taxon>
        <taxon>Anura</taxon>
        <taxon>Pipoidea</taxon>
        <taxon>Pipidae</taxon>
        <taxon>Xenopodinae</taxon>
        <taxon>Xenopus</taxon>
        <taxon>Xenopus</taxon>
    </lineage>
</organism>
<protein>
    <recommendedName>
        <fullName>Uridylate-specific endoribonuclease C</fullName>
        <ecNumber evidence="2">4.6.1.-</ecNumber>
    </recommendedName>
    <alternativeName>
        <fullName>Placental protein 11 homolog</fullName>
    </alternativeName>
    <alternativeName>
        <fullName>Protein endoU-C</fullName>
    </alternativeName>
    <alternativeName>
        <fullName>XendoU-C</fullName>
    </alternativeName>
</protein>
<dbReference type="EC" id="4.6.1.-" evidence="2"/>
<dbReference type="EMBL" id="BC153811">
    <property type="protein sequence ID" value="AAI53812.1"/>
    <property type="molecule type" value="mRNA"/>
</dbReference>
<dbReference type="EMBL" id="AB098554">
    <property type="protein sequence ID" value="BAC78386.1"/>
    <property type="molecule type" value="mRNA"/>
</dbReference>
<dbReference type="SMR" id="A8E624"/>
<dbReference type="GlyCosmos" id="A8E624">
    <property type="glycosylation" value="1 site, No reported glycans"/>
</dbReference>
<dbReference type="AGR" id="Xenbase:XB-GENE-17337868"/>
<dbReference type="OMA" id="WIRMAYL"/>
<dbReference type="Proteomes" id="UP000186698">
    <property type="component" value="Unplaced"/>
</dbReference>
<dbReference type="GO" id="GO:0005576">
    <property type="term" value="C:extracellular region"/>
    <property type="evidence" value="ECO:0007669"/>
    <property type="project" value="UniProtKB-SubCell"/>
</dbReference>
<dbReference type="GO" id="GO:0016829">
    <property type="term" value="F:lyase activity"/>
    <property type="evidence" value="ECO:0007669"/>
    <property type="project" value="UniProtKB-KW"/>
</dbReference>
<dbReference type="GO" id="GO:0046872">
    <property type="term" value="F:metal ion binding"/>
    <property type="evidence" value="ECO:0007669"/>
    <property type="project" value="UniProtKB-KW"/>
</dbReference>
<dbReference type="GO" id="GO:0003723">
    <property type="term" value="F:RNA binding"/>
    <property type="evidence" value="ECO:0000250"/>
    <property type="project" value="UniProtKB"/>
</dbReference>
<dbReference type="GO" id="GO:0004521">
    <property type="term" value="F:RNA endonuclease activity"/>
    <property type="evidence" value="ECO:0000250"/>
    <property type="project" value="UniProtKB"/>
</dbReference>
<dbReference type="CDD" id="cd21159">
    <property type="entry name" value="XendoU"/>
    <property type="match status" value="1"/>
</dbReference>
<dbReference type="InterPro" id="IPR039787">
    <property type="entry name" value="ENDOU"/>
</dbReference>
<dbReference type="InterPro" id="IPR037227">
    <property type="entry name" value="EndoU-like"/>
</dbReference>
<dbReference type="InterPro" id="IPR018998">
    <property type="entry name" value="EndoU_C"/>
</dbReference>
<dbReference type="PANTHER" id="PTHR12439">
    <property type="entry name" value="PLACENTAL PROTEIN 11-RELATED"/>
    <property type="match status" value="1"/>
</dbReference>
<dbReference type="PANTHER" id="PTHR12439:SF43">
    <property type="entry name" value="URIDYLATE-SPECIFIC ENDORIBONUCLEASE D"/>
    <property type="match status" value="1"/>
</dbReference>
<dbReference type="Pfam" id="PF09412">
    <property type="entry name" value="XendoU"/>
    <property type="match status" value="1"/>
</dbReference>
<dbReference type="SUPFAM" id="SSF142877">
    <property type="entry name" value="EndoU-like"/>
    <property type="match status" value="1"/>
</dbReference>
<dbReference type="PROSITE" id="PS51959">
    <property type="entry name" value="ENDOU"/>
    <property type="match status" value="1"/>
</dbReference>
<gene>
    <name type="primary">endou-c</name>
    <name type="synonym">pp11</name>
</gene>
<evidence type="ECO:0000250" key="1"/>
<evidence type="ECO:0000250" key="2">
    <source>
        <dbReference type="UniProtKB" id="P21128"/>
    </source>
</evidence>
<evidence type="ECO:0000255" key="3"/>
<evidence type="ECO:0000255" key="4">
    <source>
        <dbReference type="PROSITE-ProRule" id="PRU01304"/>
    </source>
</evidence>
<evidence type="ECO:0000305" key="5"/>
<comment type="function">
    <text evidence="2">Endoribonuclease that cleaves single-stranded RNAs at 5' of uridylates and releases a product with a 2',3'-cyclic phosphate at the 3'-end.</text>
</comment>
<comment type="catalytic activity">
    <reaction evidence="2">
        <text>ribonucleotidyl-uridine-RNA = a 5'-end dephospho-uridine-RNA + a 3'-end 2',3'-cyclophospho-ribonucleotide-RNA</text>
        <dbReference type="Rhea" id="RHEA:67792"/>
        <dbReference type="Rhea" id="RHEA-COMP:10464"/>
        <dbReference type="Rhea" id="RHEA-COMP:17354"/>
        <dbReference type="Rhea" id="RHEA-COMP:17356"/>
        <dbReference type="ChEBI" id="CHEBI:83064"/>
        <dbReference type="ChEBI" id="CHEBI:173117"/>
        <dbReference type="ChEBI" id="CHEBI:173224"/>
    </reaction>
    <physiologicalReaction direction="left-to-right" evidence="2">
        <dbReference type="Rhea" id="RHEA:67793"/>
    </physiologicalReaction>
</comment>
<comment type="cofactor">
    <cofactor evidence="1">
        <name>Mn(2+)</name>
        <dbReference type="ChEBI" id="CHEBI:29035"/>
    </cofactor>
</comment>
<comment type="subunit">
    <text evidence="1">Monomer.</text>
</comment>
<comment type="subcellular location">
    <subcellularLocation>
        <location evidence="5">Secreted</location>
    </subcellularLocation>
</comment>
<comment type="similarity">
    <text evidence="5">Belongs to the ENDOU family.</text>
</comment>
<keyword id="KW-0255">Endonuclease</keyword>
<keyword id="KW-0325">Glycoprotein</keyword>
<keyword id="KW-0378">Hydrolase</keyword>
<keyword id="KW-0456">Lyase</keyword>
<keyword id="KW-0464">Manganese</keyword>
<keyword id="KW-0479">Metal-binding</keyword>
<keyword id="KW-0540">Nuclease</keyword>
<keyword id="KW-1185">Reference proteome</keyword>
<keyword id="KW-0694">RNA-binding</keyword>
<keyword id="KW-0964">Secreted</keyword>
<keyword id="KW-0732">Signal</keyword>
<feature type="signal peptide" evidence="3">
    <location>
        <begin position="1"/>
        <end position="16"/>
    </location>
</feature>
<feature type="chain" id="PRO_0000394227" description="Uridylate-specific endoribonuclease C">
    <location>
        <begin position="17"/>
        <end position="303"/>
    </location>
</feature>
<feature type="domain" description="EndoU" evidence="4">
    <location>
        <begin position="32"/>
        <end position="303"/>
    </location>
</feature>
<feature type="active site" evidence="4">
    <location>
        <position position="181"/>
    </location>
</feature>
<feature type="active site" evidence="4">
    <location>
        <position position="196"/>
    </location>
</feature>
<feature type="active site" evidence="4">
    <location>
        <position position="239"/>
    </location>
</feature>
<feature type="glycosylation site" description="N-linked (GlcNAc...) asparagine" evidence="3">
    <location>
        <position position="287"/>
    </location>
</feature>
<proteinExistence type="evidence at transcript level"/>
<accession>A8E624</accession>
<accession>Q7T2H8</accession>
<name>ENDUC_XENLA</name>
<sequence length="303" mass="33756">MVYLVFLCLLPSLISGASILPEPRKDVRASATDAEIQSLAEQFYAADTNKAASGDITLNLQYKASSSQTSTGTDYANQKLFRYVNEAKLFARPTFARLVNLLDNYAQKTGSAESVPTTEVNEQNAFLDEIFKTSIITKLSNFFISKGYYSSAASFKTDLKAMWFGLYTRTSGPLDSSGFEHVFHGEIHKGKVSGLHNWVKLYLLEKSGQVNYLSYSADGVWKGYPDIYAFQLKWSTYLKTIGSFFVGSSPEFDIAMYTLCYVTRPDSLCSVKMGGSIFKIQTYTWANSTYGNGKRFVASSYPI</sequence>
<reference key="1">
    <citation type="submission" date="2007-09" db="EMBL/GenBank/DDBJ databases">
        <authorList>
            <consortium name="NIH - Xenopus Gene Collection (XGC) project"/>
        </authorList>
    </citation>
    <scope>NUCLEOTIDE SEQUENCE [LARGE SCALE MRNA]</scope>
    <source>
        <tissue>Pancreas</tissue>
    </source>
</reference>
<reference key="2">
    <citation type="journal article" date="2003" name="Dev. Growth Differ.">
        <title>Screening for novel pancreatic genes from in vitro-induced pancreas in Xenopus.</title>
        <authorList>
            <person name="Sogame A."/>
            <person name="Hayata T."/>
            <person name="Asashima M."/>
        </authorList>
    </citation>
    <scope>NUCLEOTIDE SEQUENCE [MRNA] OF 35-127</scope>
</reference>